<feature type="chain" id="PRO_0000217094" description="Na(+)/H(+) antiporter subunit E">
    <location>
        <begin position="1"/>
        <end position="158"/>
    </location>
</feature>
<feature type="transmembrane region" description="Helical" evidence="1">
    <location>
        <begin position="21"/>
        <end position="41"/>
    </location>
</feature>
<feature type="transmembrane region" description="Helical" evidence="1">
    <location>
        <begin position="51"/>
        <end position="71"/>
    </location>
</feature>
<reference key="1">
    <citation type="journal article" date="1997" name="Nature">
        <title>The complete genome sequence of the Gram-positive bacterium Bacillus subtilis.</title>
        <authorList>
            <person name="Kunst F."/>
            <person name="Ogasawara N."/>
            <person name="Moszer I."/>
            <person name="Albertini A.M."/>
            <person name="Alloni G."/>
            <person name="Azevedo V."/>
            <person name="Bertero M.G."/>
            <person name="Bessieres P."/>
            <person name="Bolotin A."/>
            <person name="Borchert S."/>
            <person name="Borriss R."/>
            <person name="Boursier L."/>
            <person name="Brans A."/>
            <person name="Braun M."/>
            <person name="Brignell S.C."/>
            <person name="Bron S."/>
            <person name="Brouillet S."/>
            <person name="Bruschi C.V."/>
            <person name="Caldwell B."/>
            <person name="Capuano V."/>
            <person name="Carter N.M."/>
            <person name="Choi S.-K."/>
            <person name="Codani J.-J."/>
            <person name="Connerton I.F."/>
            <person name="Cummings N.J."/>
            <person name="Daniel R.A."/>
            <person name="Denizot F."/>
            <person name="Devine K.M."/>
            <person name="Duesterhoeft A."/>
            <person name="Ehrlich S.D."/>
            <person name="Emmerson P.T."/>
            <person name="Entian K.-D."/>
            <person name="Errington J."/>
            <person name="Fabret C."/>
            <person name="Ferrari E."/>
            <person name="Foulger D."/>
            <person name="Fritz C."/>
            <person name="Fujita M."/>
            <person name="Fujita Y."/>
            <person name="Fuma S."/>
            <person name="Galizzi A."/>
            <person name="Galleron N."/>
            <person name="Ghim S.-Y."/>
            <person name="Glaser P."/>
            <person name="Goffeau A."/>
            <person name="Golightly E.J."/>
            <person name="Grandi G."/>
            <person name="Guiseppi G."/>
            <person name="Guy B.J."/>
            <person name="Haga K."/>
            <person name="Haiech J."/>
            <person name="Harwood C.R."/>
            <person name="Henaut A."/>
            <person name="Hilbert H."/>
            <person name="Holsappel S."/>
            <person name="Hosono S."/>
            <person name="Hullo M.-F."/>
            <person name="Itaya M."/>
            <person name="Jones L.-M."/>
            <person name="Joris B."/>
            <person name="Karamata D."/>
            <person name="Kasahara Y."/>
            <person name="Klaerr-Blanchard M."/>
            <person name="Klein C."/>
            <person name="Kobayashi Y."/>
            <person name="Koetter P."/>
            <person name="Koningstein G."/>
            <person name="Krogh S."/>
            <person name="Kumano M."/>
            <person name="Kurita K."/>
            <person name="Lapidus A."/>
            <person name="Lardinois S."/>
            <person name="Lauber J."/>
            <person name="Lazarevic V."/>
            <person name="Lee S.-M."/>
            <person name="Levine A."/>
            <person name="Liu H."/>
            <person name="Masuda S."/>
            <person name="Mauel C."/>
            <person name="Medigue C."/>
            <person name="Medina N."/>
            <person name="Mellado R.P."/>
            <person name="Mizuno M."/>
            <person name="Moestl D."/>
            <person name="Nakai S."/>
            <person name="Noback M."/>
            <person name="Noone D."/>
            <person name="O'Reilly M."/>
            <person name="Ogawa K."/>
            <person name="Ogiwara A."/>
            <person name="Oudega B."/>
            <person name="Park S.-H."/>
            <person name="Parro V."/>
            <person name="Pohl T.M."/>
            <person name="Portetelle D."/>
            <person name="Porwollik S."/>
            <person name="Prescott A.M."/>
            <person name="Presecan E."/>
            <person name="Pujic P."/>
            <person name="Purnelle B."/>
            <person name="Rapoport G."/>
            <person name="Rey M."/>
            <person name="Reynolds S."/>
            <person name="Rieger M."/>
            <person name="Rivolta C."/>
            <person name="Rocha E."/>
            <person name="Roche B."/>
            <person name="Rose M."/>
            <person name="Sadaie Y."/>
            <person name="Sato T."/>
            <person name="Scanlan E."/>
            <person name="Schleich S."/>
            <person name="Schroeter R."/>
            <person name="Scoffone F."/>
            <person name="Sekiguchi J."/>
            <person name="Sekowska A."/>
            <person name="Seror S.J."/>
            <person name="Serror P."/>
            <person name="Shin B.-S."/>
            <person name="Soldo B."/>
            <person name="Sorokin A."/>
            <person name="Tacconi E."/>
            <person name="Takagi T."/>
            <person name="Takahashi H."/>
            <person name="Takemaru K."/>
            <person name="Takeuchi M."/>
            <person name="Tamakoshi A."/>
            <person name="Tanaka T."/>
            <person name="Terpstra P."/>
            <person name="Tognoni A."/>
            <person name="Tosato V."/>
            <person name="Uchiyama S."/>
            <person name="Vandenbol M."/>
            <person name="Vannier F."/>
            <person name="Vassarotti A."/>
            <person name="Viari A."/>
            <person name="Wambutt R."/>
            <person name="Wedler E."/>
            <person name="Wedler H."/>
            <person name="Weitzenegger T."/>
            <person name="Winters P."/>
            <person name="Wipat A."/>
            <person name="Yamamoto H."/>
            <person name="Yamane K."/>
            <person name="Yasumoto K."/>
            <person name="Yata K."/>
            <person name="Yoshida K."/>
            <person name="Yoshikawa H.-F."/>
            <person name="Zumstein E."/>
            <person name="Yoshikawa H."/>
            <person name="Danchin A."/>
        </authorList>
    </citation>
    <scope>NUCLEOTIDE SEQUENCE [LARGE SCALE GENOMIC DNA]</scope>
    <source>
        <strain>168</strain>
    </source>
</reference>
<reference key="2">
    <citation type="journal article" date="2009" name="Microbiology">
        <title>From a consortium sequence to a unified sequence: the Bacillus subtilis 168 reference genome a decade later.</title>
        <authorList>
            <person name="Barbe V."/>
            <person name="Cruveiller S."/>
            <person name="Kunst F."/>
            <person name="Lenoble P."/>
            <person name="Meurice G."/>
            <person name="Sekowska A."/>
            <person name="Vallenet D."/>
            <person name="Wang T."/>
            <person name="Moszer I."/>
            <person name="Medigue C."/>
            <person name="Danchin A."/>
        </authorList>
    </citation>
    <scope>SEQUENCE REVISION TO 3; 14; 40; 50 AND 92</scope>
</reference>
<reference key="3">
    <citation type="journal article" date="1999" name="J. Bacteriol.">
        <title>mrp, a multigene, multifunctional locus in Bacillus subtilis with roles in resistance to cholate and to Na+ and in pH homeostasis.</title>
        <authorList>
            <person name="Ito M."/>
            <person name="Guffanti A.A."/>
            <person name="Oudega B."/>
            <person name="Krulwich T.A."/>
        </authorList>
    </citation>
    <scope>FUNCTION</scope>
</reference>
<reference key="4">
    <citation type="journal article" date="2001" name="FEBS Lett.">
        <title>Mrp-dependent Na(+)/H(+) antiporters of Bacillus exhibit characteristics that are unanticipated for completely secondary active transporters.</title>
        <authorList>
            <person name="Ito M."/>
            <person name="Guffanti A.A."/>
            <person name="Krulwich T.A."/>
        </authorList>
    </citation>
    <scope>COUPLING ENERGIZATION MODE</scope>
</reference>
<reference key="5">
    <citation type="journal article" date="2007" name="J. Bacteriol.">
        <title>Catalytic properties of Staphylococcus aureus and Bacillus members of the secondary cation/proton antiporter-3 (Mrp) family are revealed by an optimized assay in an Escherichia coli host.</title>
        <authorList>
            <person name="Swartz T.H."/>
            <person name="Ito M."/>
            <person name="Ohira T."/>
            <person name="Natsui S."/>
            <person name="Hicks D.B."/>
            <person name="Krulwich T.A."/>
        </authorList>
    </citation>
    <scope>FUNCTION IN ANTIPORT OF LITHIUM</scope>
</reference>
<reference key="6">
    <citation type="journal article" date="2007" name="J. Bacteriol.">
        <title>Complex formation by the mrpABCDEFG gene products, which constitute a principal Na+/H+ antiporter in Bacillus subtilis.</title>
        <authorList>
            <person name="Kajiyama Y."/>
            <person name="Otagiri M."/>
            <person name="Sekiguchi J."/>
            <person name="Kosono S."/>
            <person name="Kudo T."/>
        </authorList>
    </citation>
    <scope>SUBUNIT</scope>
    <source>
        <strain>168 / Marburg / UOT1285</strain>
    </source>
</reference>
<accession>Q7WY60</accession>
<organism>
    <name type="scientific">Bacillus subtilis (strain 168)</name>
    <dbReference type="NCBI Taxonomy" id="224308"/>
    <lineage>
        <taxon>Bacteria</taxon>
        <taxon>Bacillati</taxon>
        <taxon>Bacillota</taxon>
        <taxon>Bacilli</taxon>
        <taxon>Bacillales</taxon>
        <taxon>Bacillaceae</taxon>
        <taxon>Bacillus</taxon>
    </lineage>
</organism>
<protein>
    <recommendedName>
        <fullName>Na(+)/H(+) antiporter subunit E</fullName>
    </recommendedName>
    <alternativeName>
        <fullName>Mrp complex subunit E</fullName>
    </alternativeName>
    <alternativeName>
        <fullName>Multiple resistance and pH homeostasis protein E</fullName>
    </alternativeName>
</protein>
<gene>
    <name type="primary">mrpE</name>
    <name type="ordered locus">BSU31640</name>
</gene>
<name>MRPE_BACSU</name>
<sequence>MAFQILLNVFLAFCWMFLSNSPSAAGFITGYILGMLSLFFFRRFFTRQFYLWKLISIIKLCFIFIKELYLANVSVMKSVLSPKLNIRPGIFAFKTELTKDWEITMLSLLITLTPGTLVMDISDDRTILYIHAMDIEDAEKAIFDIRESFEKAIQEVSR</sequence>
<comment type="function">
    <text evidence="2 3">Mrp complex is a Na(+)/H(+) antiporter that is considered to be the major Na(+) excretion system in B.subtilis. Has a major role in Na(+) resistance and a minor role in Na(+)- and K(+)-dependent pH homeostasis as compared to TetB. MrpA may be the actual Na(+)/H(+) antiporter, although the six other Mrp proteins are all required for Na(+)/H(+) antiport activity and Na(+) resistance. MrpA is required for initiation of sporulation when external Na(+) concentration increases. Also transports Li(+) but not K(+), Ca(2+) or Mg(2+).</text>
</comment>
<comment type="subunit">
    <text evidence="4">Forms a heterooligomeric complex that consists of seven subunits: MrpA, MrpB, MrpC, MrpD, MrpE, MrpF and MrpG.</text>
</comment>
<comment type="subcellular location">
    <subcellularLocation>
        <location evidence="5">Cell membrane</location>
        <topology evidence="5">Multi-pass membrane protein</topology>
    </subcellularLocation>
</comment>
<comment type="miscellaneous">
    <text>Mrp-dependent antiport apparently occurs by a secondary, proton motive force-dependent mechanism, but the similarity of several Mrp proteins to membrane-embedded subunits of energy-coupled NADH dehydrogenase complexes raises the possibility that there is a capacity for electron transport that could provide a primary energy coupling option for Mrp functions.</text>
</comment>
<comment type="similarity">
    <text evidence="5">Belongs to the CPA3 antiporters (TC 2.A.63) subunit E family.</text>
</comment>
<proteinExistence type="evidence at protein level"/>
<dbReference type="EMBL" id="AL009126">
    <property type="protein sequence ID" value="CAE01465.2"/>
    <property type="molecule type" value="Genomic_DNA"/>
</dbReference>
<dbReference type="RefSeq" id="WP_003244015.1">
    <property type="nucleotide sequence ID" value="NZ_OZ025638.1"/>
</dbReference>
<dbReference type="RefSeq" id="YP_054591.2">
    <property type="nucleotide sequence ID" value="NC_000964.3"/>
</dbReference>
<dbReference type="SMR" id="Q7WY60"/>
<dbReference type="FunCoup" id="Q7WY60">
    <property type="interactions" value="13"/>
</dbReference>
<dbReference type="STRING" id="224308.BSU31640"/>
<dbReference type="TCDB" id="2.A.63.1.4">
    <property type="family name" value="the monovalent cation (k(+) or na(+)):proton antiporter-3 (cpa3) family"/>
</dbReference>
<dbReference type="PaxDb" id="224308-BSU31640"/>
<dbReference type="EnsemblBacteria" id="CAE01465">
    <property type="protein sequence ID" value="CAE01465"/>
    <property type="gene ID" value="BSU_31640"/>
</dbReference>
<dbReference type="GeneID" id="2914191"/>
<dbReference type="KEGG" id="bsu:BSU31640"/>
<dbReference type="PATRIC" id="fig|224308.179.peg.3429"/>
<dbReference type="eggNOG" id="COG1863">
    <property type="taxonomic scope" value="Bacteria"/>
</dbReference>
<dbReference type="InParanoid" id="Q7WY60"/>
<dbReference type="OrthoDB" id="9800498at2"/>
<dbReference type="PhylomeDB" id="Q7WY60"/>
<dbReference type="BioCyc" id="BSUB:BSU31640-MONOMER"/>
<dbReference type="Proteomes" id="UP000001570">
    <property type="component" value="Chromosome"/>
</dbReference>
<dbReference type="GO" id="GO:0005886">
    <property type="term" value="C:plasma membrane"/>
    <property type="evidence" value="ECO:0007669"/>
    <property type="project" value="UniProtKB-SubCell"/>
</dbReference>
<dbReference type="GO" id="GO:0015385">
    <property type="term" value="F:sodium:proton antiporter activity"/>
    <property type="evidence" value="ECO:0000318"/>
    <property type="project" value="GO_Central"/>
</dbReference>
<dbReference type="GO" id="GO:0035725">
    <property type="term" value="P:sodium ion transmembrane transport"/>
    <property type="evidence" value="ECO:0000318"/>
    <property type="project" value="GO_Central"/>
</dbReference>
<dbReference type="InterPro" id="IPR002758">
    <property type="entry name" value="Cation_antiport_E"/>
</dbReference>
<dbReference type="NCBIfam" id="NF006517">
    <property type="entry name" value="PRK08965.1-1"/>
    <property type="match status" value="1"/>
</dbReference>
<dbReference type="NCBIfam" id="NF009292">
    <property type="entry name" value="PRK12651.1-3"/>
    <property type="match status" value="1"/>
</dbReference>
<dbReference type="PANTHER" id="PTHR34584">
    <property type="entry name" value="NA(+)/H(+) ANTIPORTER SUBUNIT E1"/>
    <property type="match status" value="1"/>
</dbReference>
<dbReference type="PANTHER" id="PTHR34584:SF1">
    <property type="entry name" value="NA(+)_H(+) ANTIPORTER SUBUNIT E1"/>
    <property type="match status" value="1"/>
</dbReference>
<dbReference type="Pfam" id="PF01899">
    <property type="entry name" value="MNHE"/>
    <property type="match status" value="1"/>
</dbReference>
<dbReference type="PIRSF" id="PIRSF019239">
    <property type="entry name" value="MrpE"/>
    <property type="match status" value="1"/>
</dbReference>
<keyword id="KW-0050">Antiport</keyword>
<keyword id="KW-1003">Cell membrane</keyword>
<keyword id="KW-0375">Hydrogen ion transport</keyword>
<keyword id="KW-0406">Ion transport</keyword>
<keyword id="KW-0472">Membrane</keyword>
<keyword id="KW-1185">Reference proteome</keyword>
<keyword id="KW-0915">Sodium</keyword>
<keyword id="KW-0739">Sodium transport</keyword>
<keyword id="KW-0812">Transmembrane</keyword>
<keyword id="KW-1133">Transmembrane helix</keyword>
<keyword id="KW-0813">Transport</keyword>
<evidence type="ECO:0000255" key="1"/>
<evidence type="ECO:0000269" key="2">
    <source>
    </source>
</evidence>
<evidence type="ECO:0000269" key="3">
    <source>
    </source>
</evidence>
<evidence type="ECO:0000269" key="4">
    <source>
    </source>
</evidence>
<evidence type="ECO:0000305" key="5"/>